<accession>P66239</accession>
<accession>Q8NL17</accession>
<feature type="chain" id="PRO_0000170267" description="Large ribosomal subunit protein bL33">
    <location>
        <begin position="1"/>
        <end position="55"/>
    </location>
</feature>
<protein>
    <recommendedName>
        <fullName evidence="1">Large ribosomal subunit protein bL33</fullName>
    </recommendedName>
    <alternativeName>
        <fullName evidence="2">50S ribosomal protein L33</fullName>
    </alternativeName>
</protein>
<reference key="1">
    <citation type="journal article" date="2002" name="Nature">
        <title>Comparison of the genomes of two Xanthomonas pathogens with differing host specificities.</title>
        <authorList>
            <person name="da Silva A.C.R."/>
            <person name="Ferro J.A."/>
            <person name="Reinach F.C."/>
            <person name="Farah C.S."/>
            <person name="Furlan L.R."/>
            <person name="Quaggio R.B."/>
            <person name="Monteiro-Vitorello C.B."/>
            <person name="Van Sluys M.A."/>
            <person name="Almeida N.F. Jr."/>
            <person name="Alves L.M.C."/>
            <person name="do Amaral A.M."/>
            <person name="Bertolini M.C."/>
            <person name="Camargo L.E.A."/>
            <person name="Camarotte G."/>
            <person name="Cannavan F."/>
            <person name="Cardozo J."/>
            <person name="Chambergo F."/>
            <person name="Ciapina L.P."/>
            <person name="Cicarelli R.M.B."/>
            <person name="Coutinho L.L."/>
            <person name="Cursino-Santos J.R."/>
            <person name="El-Dorry H."/>
            <person name="Faria J.B."/>
            <person name="Ferreira A.J.S."/>
            <person name="Ferreira R.C.C."/>
            <person name="Ferro M.I.T."/>
            <person name="Formighieri E.F."/>
            <person name="Franco M.C."/>
            <person name="Greggio C.C."/>
            <person name="Gruber A."/>
            <person name="Katsuyama A.M."/>
            <person name="Kishi L.T."/>
            <person name="Leite R.P."/>
            <person name="Lemos E.G.M."/>
            <person name="Lemos M.V.F."/>
            <person name="Locali E.C."/>
            <person name="Machado M.A."/>
            <person name="Madeira A.M.B.N."/>
            <person name="Martinez-Rossi N.M."/>
            <person name="Martins E.C."/>
            <person name="Meidanis J."/>
            <person name="Menck C.F.M."/>
            <person name="Miyaki C.Y."/>
            <person name="Moon D.H."/>
            <person name="Moreira L.M."/>
            <person name="Novo M.T.M."/>
            <person name="Okura V.K."/>
            <person name="Oliveira M.C."/>
            <person name="Oliveira V.R."/>
            <person name="Pereira H.A."/>
            <person name="Rossi A."/>
            <person name="Sena J.A.D."/>
            <person name="Silva C."/>
            <person name="de Souza R.F."/>
            <person name="Spinola L.A.F."/>
            <person name="Takita M.A."/>
            <person name="Tamura R.E."/>
            <person name="Teixeira E.C."/>
            <person name="Tezza R.I.D."/>
            <person name="Trindade dos Santos M."/>
            <person name="Truffi D."/>
            <person name="Tsai S.M."/>
            <person name="White F.F."/>
            <person name="Setubal J.C."/>
            <person name="Kitajima J.P."/>
        </authorList>
    </citation>
    <scope>NUCLEOTIDE SEQUENCE [LARGE SCALE GENOMIC DNA]</scope>
    <source>
        <strain>ATCC 33913 / DSM 3586 / NCPPB 528 / LMG 568 / P 25</strain>
    </source>
</reference>
<gene>
    <name evidence="1" type="primary">rpmG</name>
    <name type="ordered locus">XCC4033</name>
</gene>
<comment type="similarity">
    <text evidence="1">Belongs to the bacterial ribosomal protein bL33 family.</text>
</comment>
<proteinExistence type="inferred from homology"/>
<dbReference type="EMBL" id="AE008922">
    <property type="protein sequence ID" value="AAM43254.1"/>
    <property type="molecule type" value="Genomic_DNA"/>
</dbReference>
<dbReference type="RefSeq" id="NP_639372.1">
    <property type="nucleotide sequence ID" value="NC_003902.1"/>
</dbReference>
<dbReference type="RefSeq" id="WP_002809462.1">
    <property type="nucleotide sequence ID" value="NC_003902.1"/>
</dbReference>
<dbReference type="SMR" id="P66239"/>
<dbReference type="STRING" id="190485.XCC4033"/>
<dbReference type="EnsemblBacteria" id="AAM43254">
    <property type="protein sequence ID" value="AAM43254"/>
    <property type="gene ID" value="XCC4033"/>
</dbReference>
<dbReference type="GeneID" id="97512303"/>
<dbReference type="KEGG" id="xcc:XCC4033"/>
<dbReference type="PATRIC" id="fig|190485.4.peg.4319"/>
<dbReference type="eggNOG" id="COG0267">
    <property type="taxonomic scope" value="Bacteria"/>
</dbReference>
<dbReference type="HOGENOM" id="CLU_190949_1_1_6"/>
<dbReference type="OrthoDB" id="21586at2"/>
<dbReference type="PRO" id="PR:P66239"/>
<dbReference type="Proteomes" id="UP000001010">
    <property type="component" value="Chromosome"/>
</dbReference>
<dbReference type="GO" id="GO:0022625">
    <property type="term" value="C:cytosolic large ribosomal subunit"/>
    <property type="evidence" value="ECO:0000318"/>
    <property type="project" value="GO_Central"/>
</dbReference>
<dbReference type="GO" id="GO:0003735">
    <property type="term" value="F:structural constituent of ribosome"/>
    <property type="evidence" value="ECO:0000318"/>
    <property type="project" value="GO_Central"/>
</dbReference>
<dbReference type="GO" id="GO:0006412">
    <property type="term" value="P:translation"/>
    <property type="evidence" value="ECO:0007669"/>
    <property type="project" value="UniProtKB-UniRule"/>
</dbReference>
<dbReference type="FunFam" id="2.20.28.120:FF:000001">
    <property type="entry name" value="50S ribosomal protein L33"/>
    <property type="match status" value="1"/>
</dbReference>
<dbReference type="Gene3D" id="2.20.28.120">
    <property type="entry name" value="Ribosomal protein L33"/>
    <property type="match status" value="1"/>
</dbReference>
<dbReference type="HAMAP" id="MF_00294">
    <property type="entry name" value="Ribosomal_bL33"/>
    <property type="match status" value="1"/>
</dbReference>
<dbReference type="InterPro" id="IPR001705">
    <property type="entry name" value="Ribosomal_bL33"/>
</dbReference>
<dbReference type="InterPro" id="IPR018264">
    <property type="entry name" value="Ribosomal_bL33_CS"/>
</dbReference>
<dbReference type="InterPro" id="IPR038584">
    <property type="entry name" value="Ribosomal_bL33_sf"/>
</dbReference>
<dbReference type="InterPro" id="IPR011332">
    <property type="entry name" value="Ribosomal_zn-bd"/>
</dbReference>
<dbReference type="NCBIfam" id="NF001860">
    <property type="entry name" value="PRK00595.1"/>
    <property type="match status" value="1"/>
</dbReference>
<dbReference type="NCBIfam" id="TIGR01023">
    <property type="entry name" value="rpmG_bact"/>
    <property type="match status" value="1"/>
</dbReference>
<dbReference type="PANTHER" id="PTHR15238">
    <property type="entry name" value="54S RIBOSOMAL PROTEIN L39, MITOCHONDRIAL"/>
    <property type="match status" value="1"/>
</dbReference>
<dbReference type="PANTHER" id="PTHR15238:SF1">
    <property type="entry name" value="LARGE RIBOSOMAL SUBUNIT PROTEIN BL33M"/>
    <property type="match status" value="1"/>
</dbReference>
<dbReference type="Pfam" id="PF00471">
    <property type="entry name" value="Ribosomal_L33"/>
    <property type="match status" value="1"/>
</dbReference>
<dbReference type="SUPFAM" id="SSF57829">
    <property type="entry name" value="Zn-binding ribosomal proteins"/>
    <property type="match status" value="1"/>
</dbReference>
<dbReference type="PROSITE" id="PS00582">
    <property type="entry name" value="RIBOSOMAL_L33"/>
    <property type="match status" value="1"/>
</dbReference>
<organism>
    <name type="scientific">Xanthomonas campestris pv. campestris (strain ATCC 33913 / DSM 3586 / NCPPB 528 / LMG 568 / P 25)</name>
    <dbReference type="NCBI Taxonomy" id="190485"/>
    <lineage>
        <taxon>Bacteria</taxon>
        <taxon>Pseudomonadati</taxon>
        <taxon>Pseudomonadota</taxon>
        <taxon>Gammaproteobacteria</taxon>
        <taxon>Lysobacterales</taxon>
        <taxon>Lysobacteraceae</taxon>
        <taxon>Xanthomonas</taxon>
    </lineage>
</organism>
<sequence length="55" mass="6406">MAKGKRDKIRMISSAATGHFYTTDKNKKNTPGKMEMMKYDPVVRKHVMYKEGKIK</sequence>
<keyword id="KW-1185">Reference proteome</keyword>
<keyword id="KW-0687">Ribonucleoprotein</keyword>
<keyword id="KW-0689">Ribosomal protein</keyword>
<name>RL33_XANCP</name>
<evidence type="ECO:0000255" key="1">
    <source>
        <dbReference type="HAMAP-Rule" id="MF_00294"/>
    </source>
</evidence>
<evidence type="ECO:0000305" key="2"/>